<name>RR3_CUSOB</name>
<organism>
    <name type="scientific">Cuscuta obtusiflora</name>
    <name type="common">Peruvian dodder</name>
    <dbReference type="NCBI Taxonomy" id="437280"/>
    <lineage>
        <taxon>Eukaryota</taxon>
        <taxon>Viridiplantae</taxon>
        <taxon>Streptophyta</taxon>
        <taxon>Embryophyta</taxon>
        <taxon>Tracheophyta</taxon>
        <taxon>Spermatophyta</taxon>
        <taxon>Magnoliopsida</taxon>
        <taxon>eudicotyledons</taxon>
        <taxon>Gunneridae</taxon>
        <taxon>Pentapetalae</taxon>
        <taxon>asterids</taxon>
        <taxon>lamiids</taxon>
        <taxon>Solanales</taxon>
        <taxon>Convolvulaceae</taxon>
        <taxon>Cuscuteae</taxon>
        <taxon>Cuscuta</taxon>
        <taxon>Cuscuta subgen. Grammica</taxon>
        <taxon>Cuscuta sect. Cleistogrammica</taxon>
    </lineage>
</organism>
<protein>
    <recommendedName>
        <fullName evidence="2">Small ribosomal subunit protein uS3c</fullName>
    </recommendedName>
    <alternativeName>
        <fullName>Plastid 30S ribosomal protein S3</fullName>
    </alternativeName>
</protein>
<reference key="1">
    <citation type="journal article" date="2007" name="BMC Plant Biol.">
        <title>Complete plastid genome sequences suggest strong selection for retention of photosynthetic genes in the parasitic plant genus Cuscuta.</title>
        <authorList>
            <person name="McNeal J.R."/>
            <person name="Kuehl J.V."/>
            <person name="Boore J.L."/>
            <person name="dePamphilis C.W."/>
        </authorList>
    </citation>
    <scope>NUCLEOTIDE SEQUENCE [LARGE SCALE GENOMIC DNA]</scope>
</reference>
<keyword id="KW-0934">Plastid</keyword>
<keyword id="KW-0687">Ribonucleoprotein</keyword>
<keyword id="KW-0689">Ribosomal protein</keyword>
<keyword id="KW-0694">RNA-binding</keyword>
<keyword id="KW-0699">rRNA-binding</keyword>
<accession>A8W3M0</accession>
<evidence type="ECO:0000250" key="1"/>
<evidence type="ECO:0000305" key="2"/>
<dbReference type="EMBL" id="EU189133">
    <property type="protein sequence ID" value="ABW20595.1"/>
    <property type="molecule type" value="Genomic_DNA"/>
</dbReference>
<dbReference type="RefSeq" id="YP_001531250.1">
    <property type="nucleotide sequence ID" value="NC_009949.1"/>
</dbReference>
<dbReference type="SMR" id="A8W3M0"/>
<dbReference type="GeneID" id="5714846"/>
<dbReference type="GO" id="GO:0022627">
    <property type="term" value="C:cytosolic small ribosomal subunit"/>
    <property type="evidence" value="ECO:0007669"/>
    <property type="project" value="TreeGrafter"/>
</dbReference>
<dbReference type="GO" id="GO:0009536">
    <property type="term" value="C:plastid"/>
    <property type="evidence" value="ECO:0007669"/>
    <property type="project" value="UniProtKB-SubCell"/>
</dbReference>
<dbReference type="GO" id="GO:0019843">
    <property type="term" value="F:rRNA binding"/>
    <property type="evidence" value="ECO:0007669"/>
    <property type="project" value="UniProtKB-KW"/>
</dbReference>
<dbReference type="GO" id="GO:0003735">
    <property type="term" value="F:structural constituent of ribosome"/>
    <property type="evidence" value="ECO:0007669"/>
    <property type="project" value="InterPro"/>
</dbReference>
<dbReference type="GO" id="GO:0006412">
    <property type="term" value="P:translation"/>
    <property type="evidence" value="ECO:0007669"/>
    <property type="project" value="InterPro"/>
</dbReference>
<dbReference type="CDD" id="cd02412">
    <property type="entry name" value="KH-II_30S_S3"/>
    <property type="match status" value="1"/>
</dbReference>
<dbReference type="FunFam" id="3.30.1140.32:FF:000003">
    <property type="entry name" value="30S ribosomal protein S3, chloroplastic"/>
    <property type="match status" value="1"/>
</dbReference>
<dbReference type="Gene3D" id="3.30.300.20">
    <property type="match status" value="1"/>
</dbReference>
<dbReference type="Gene3D" id="3.30.1140.32">
    <property type="entry name" value="Ribosomal protein S3, C-terminal domain"/>
    <property type="match status" value="1"/>
</dbReference>
<dbReference type="HAMAP" id="MF_01309_B">
    <property type="entry name" value="Ribosomal_uS3_B"/>
    <property type="match status" value="1"/>
</dbReference>
<dbReference type="InterPro" id="IPR015946">
    <property type="entry name" value="KH_dom-like_a/b"/>
</dbReference>
<dbReference type="InterPro" id="IPR009019">
    <property type="entry name" value="KH_sf_prok-type"/>
</dbReference>
<dbReference type="InterPro" id="IPR036419">
    <property type="entry name" value="Ribosomal_S3_C_sf"/>
</dbReference>
<dbReference type="InterPro" id="IPR005704">
    <property type="entry name" value="Ribosomal_uS3_bac-typ"/>
</dbReference>
<dbReference type="InterPro" id="IPR001351">
    <property type="entry name" value="Ribosomal_uS3_C"/>
</dbReference>
<dbReference type="NCBIfam" id="TIGR01009">
    <property type="entry name" value="rpsC_bact"/>
    <property type="match status" value="1"/>
</dbReference>
<dbReference type="PANTHER" id="PTHR11760">
    <property type="entry name" value="30S/40S RIBOSOMAL PROTEIN S3"/>
    <property type="match status" value="1"/>
</dbReference>
<dbReference type="PANTHER" id="PTHR11760:SF19">
    <property type="entry name" value="SMALL RIBOSOMAL SUBUNIT PROTEIN US3C"/>
    <property type="match status" value="1"/>
</dbReference>
<dbReference type="Pfam" id="PF00189">
    <property type="entry name" value="Ribosomal_S3_C"/>
    <property type="match status" value="1"/>
</dbReference>
<dbReference type="SUPFAM" id="SSF54814">
    <property type="entry name" value="Prokaryotic type KH domain (KH-domain type II)"/>
    <property type="match status" value="1"/>
</dbReference>
<dbReference type="SUPFAM" id="SSF54821">
    <property type="entry name" value="Ribosomal protein S3 C-terminal domain"/>
    <property type="match status" value="1"/>
</dbReference>
<gene>
    <name type="primary">rps3</name>
</gene>
<sequence>MGQKINPLGLRLGTNQDHYSIWFSQPKAYSKSLQEDQKIRSFIRKYIQNMKISPSGVEGLARISIYKRIDLIELRIFLGFPKLLLENRPQGLEKLQITLQKELNCGNRRLNIVITKVEKPYSNPNILAEFIAGQLKNRVSVRQAMKKAIELAEEADTKGIQVQVAGRLNGQDIARVQWIREGRVPRQTIRATFDYCSYPVRTIYGILGIKIWIFVGEAK</sequence>
<comment type="subunit">
    <text evidence="1">Part of the 30S ribosomal subunit.</text>
</comment>
<comment type="subcellular location">
    <subcellularLocation>
        <location>Plastid</location>
    </subcellularLocation>
</comment>
<comment type="similarity">
    <text evidence="2">Belongs to the universal ribosomal protein uS3 family.</text>
</comment>
<comment type="caution">
    <text evidence="2">Only inflorescences, fruits, starved seedlings and stressed stem tips are green in this organism.</text>
</comment>
<proteinExistence type="inferred from homology"/>
<geneLocation type="plastid"/>
<feature type="chain" id="PRO_0000323323" description="Small ribosomal subunit protein uS3c">
    <location>
        <begin position="1"/>
        <end position="219"/>
    </location>
</feature>
<feature type="domain" description="KH type-2">
    <location>
        <begin position="39"/>
        <end position="118"/>
    </location>
</feature>